<name>YPI1_SCHPO</name>
<organism>
    <name type="scientific">Schizosaccharomyces pombe (strain 972 / ATCC 24843)</name>
    <name type="common">Fission yeast</name>
    <dbReference type="NCBI Taxonomy" id="284812"/>
    <lineage>
        <taxon>Eukaryota</taxon>
        <taxon>Fungi</taxon>
        <taxon>Dikarya</taxon>
        <taxon>Ascomycota</taxon>
        <taxon>Taphrinomycotina</taxon>
        <taxon>Schizosaccharomycetes</taxon>
        <taxon>Schizosaccharomycetales</taxon>
        <taxon>Schizosaccharomycetaceae</taxon>
        <taxon>Schizosaccharomyces</taxon>
    </lineage>
</organism>
<gene>
    <name type="primary">ypi1</name>
    <name type="ORF">SPAC6B12.13</name>
</gene>
<reference key="1">
    <citation type="journal article" date="2002" name="Nature">
        <title>The genome sequence of Schizosaccharomyces pombe.</title>
        <authorList>
            <person name="Wood V."/>
            <person name="Gwilliam R."/>
            <person name="Rajandream M.A."/>
            <person name="Lyne M.H."/>
            <person name="Lyne R."/>
            <person name="Stewart A."/>
            <person name="Sgouros J.G."/>
            <person name="Peat N."/>
            <person name="Hayles J."/>
            <person name="Baker S.G."/>
            <person name="Basham D."/>
            <person name="Bowman S."/>
            <person name="Brooks K."/>
            <person name="Brown D."/>
            <person name="Brown S."/>
            <person name="Chillingworth T."/>
            <person name="Churcher C.M."/>
            <person name="Collins M."/>
            <person name="Connor R."/>
            <person name="Cronin A."/>
            <person name="Davis P."/>
            <person name="Feltwell T."/>
            <person name="Fraser A."/>
            <person name="Gentles S."/>
            <person name="Goble A."/>
            <person name="Hamlin N."/>
            <person name="Harris D.E."/>
            <person name="Hidalgo J."/>
            <person name="Hodgson G."/>
            <person name="Holroyd S."/>
            <person name="Hornsby T."/>
            <person name="Howarth S."/>
            <person name="Huckle E.J."/>
            <person name="Hunt S."/>
            <person name="Jagels K."/>
            <person name="James K.D."/>
            <person name="Jones L."/>
            <person name="Jones M."/>
            <person name="Leather S."/>
            <person name="McDonald S."/>
            <person name="McLean J."/>
            <person name="Mooney P."/>
            <person name="Moule S."/>
            <person name="Mungall K.L."/>
            <person name="Murphy L.D."/>
            <person name="Niblett D."/>
            <person name="Odell C."/>
            <person name="Oliver K."/>
            <person name="O'Neil S."/>
            <person name="Pearson D."/>
            <person name="Quail M.A."/>
            <person name="Rabbinowitsch E."/>
            <person name="Rutherford K.M."/>
            <person name="Rutter S."/>
            <person name="Saunders D."/>
            <person name="Seeger K."/>
            <person name="Sharp S."/>
            <person name="Skelton J."/>
            <person name="Simmonds M.N."/>
            <person name="Squares R."/>
            <person name="Squares S."/>
            <person name="Stevens K."/>
            <person name="Taylor K."/>
            <person name="Taylor R.G."/>
            <person name="Tivey A."/>
            <person name="Walsh S.V."/>
            <person name="Warren T."/>
            <person name="Whitehead S."/>
            <person name="Woodward J.R."/>
            <person name="Volckaert G."/>
            <person name="Aert R."/>
            <person name="Robben J."/>
            <person name="Grymonprez B."/>
            <person name="Weltjens I."/>
            <person name="Vanstreels E."/>
            <person name="Rieger M."/>
            <person name="Schaefer M."/>
            <person name="Mueller-Auer S."/>
            <person name="Gabel C."/>
            <person name="Fuchs M."/>
            <person name="Duesterhoeft A."/>
            <person name="Fritzc C."/>
            <person name="Holzer E."/>
            <person name="Moestl D."/>
            <person name="Hilbert H."/>
            <person name="Borzym K."/>
            <person name="Langer I."/>
            <person name="Beck A."/>
            <person name="Lehrach H."/>
            <person name="Reinhardt R."/>
            <person name="Pohl T.M."/>
            <person name="Eger P."/>
            <person name="Zimmermann W."/>
            <person name="Wedler H."/>
            <person name="Wambutt R."/>
            <person name="Purnelle B."/>
            <person name="Goffeau A."/>
            <person name="Cadieu E."/>
            <person name="Dreano S."/>
            <person name="Gloux S."/>
            <person name="Lelaure V."/>
            <person name="Mottier S."/>
            <person name="Galibert F."/>
            <person name="Aves S.J."/>
            <person name="Xiang Z."/>
            <person name="Hunt C."/>
            <person name="Moore K."/>
            <person name="Hurst S.M."/>
            <person name="Lucas M."/>
            <person name="Rochet M."/>
            <person name="Gaillardin C."/>
            <person name="Tallada V.A."/>
            <person name="Garzon A."/>
            <person name="Thode G."/>
            <person name="Daga R.R."/>
            <person name="Cruzado L."/>
            <person name="Jimenez J."/>
            <person name="Sanchez M."/>
            <person name="del Rey F."/>
            <person name="Benito J."/>
            <person name="Dominguez A."/>
            <person name="Revuelta J.L."/>
            <person name="Moreno S."/>
            <person name="Armstrong J."/>
            <person name="Forsburg S.L."/>
            <person name="Cerutti L."/>
            <person name="Lowe T."/>
            <person name="McCombie W.R."/>
            <person name="Paulsen I."/>
            <person name="Potashkin J."/>
            <person name="Shpakovski G.V."/>
            <person name="Ussery D."/>
            <person name="Barrell B.G."/>
            <person name="Nurse P."/>
        </authorList>
    </citation>
    <scope>NUCLEOTIDE SEQUENCE [LARGE SCALE GENOMIC DNA]</scope>
    <source>
        <strain>972 / ATCC 24843</strain>
    </source>
</reference>
<comment type="function">
    <text evidence="1">Regulator of type 1 phosphatases which maintains protein phosphatase activity under strict control.</text>
</comment>
<comment type="subcellular location">
    <subcellularLocation>
        <location evidence="1">Nucleus</location>
    </subcellularLocation>
</comment>
<comment type="similarity">
    <text evidence="3">Belongs to the YPI1 family.</text>
</comment>
<evidence type="ECO:0000250" key="1"/>
<evidence type="ECO:0000256" key="2">
    <source>
        <dbReference type="SAM" id="MobiDB-lite"/>
    </source>
</evidence>
<evidence type="ECO:0000305" key="3"/>
<accession>O14218</accession>
<dbReference type="EMBL" id="CU329670">
    <property type="protein sequence ID" value="CAB11073.1"/>
    <property type="molecule type" value="Genomic_DNA"/>
</dbReference>
<dbReference type="PIR" id="T39020">
    <property type="entry name" value="T39020"/>
</dbReference>
<dbReference type="RefSeq" id="NP_593768.1">
    <property type="nucleotide sequence ID" value="NM_001019198.2"/>
</dbReference>
<dbReference type="BioGRID" id="279727">
    <property type="interactions" value="2"/>
</dbReference>
<dbReference type="FunCoup" id="O14218">
    <property type="interactions" value="270"/>
</dbReference>
<dbReference type="STRING" id="284812.O14218"/>
<dbReference type="iPTMnet" id="O14218"/>
<dbReference type="PaxDb" id="4896-SPAC6B12.13.1"/>
<dbReference type="EnsemblFungi" id="SPAC6B12.13.1">
    <property type="protein sequence ID" value="SPAC6B12.13.1:pep"/>
    <property type="gene ID" value="SPAC6B12.13"/>
</dbReference>
<dbReference type="KEGG" id="spo:2543302"/>
<dbReference type="PomBase" id="SPAC6B12.13"/>
<dbReference type="VEuPathDB" id="FungiDB:SPAC6B12.13"/>
<dbReference type="eggNOG" id="KOG4102">
    <property type="taxonomic scope" value="Eukaryota"/>
</dbReference>
<dbReference type="HOGENOM" id="CLU_098333_6_0_1"/>
<dbReference type="InParanoid" id="O14218"/>
<dbReference type="OMA" id="NCCHEEA"/>
<dbReference type="PRO" id="PR:O14218"/>
<dbReference type="Proteomes" id="UP000002485">
    <property type="component" value="Chromosome I"/>
</dbReference>
<dbReference type="GO" id="GO:0005829">
    <property type="term" value="C:cytosol"/>
    <property type="evidence" value="ECO:0007005"/>
    <property type="project" value="PomBase"/>
</dbReference>
<dbReference type="GO" id="GO:0005634">
    <property type="term" value="C:nucleus"/>
    <property type="evidence" value="ECO:0007005"/>
    <property type="project" value="PomBase"/>
</dbReference>
<dbReference type="GO" id="GO:0008157">
    <property type="term" value="F:protein phosphatase 1 binding"/>
    <property type="evidence" value="ECO:0000318"/>
    <property type="project" value="GO_Central"/>
</dbReference>
<dbReference type="GO" id="GO:0004865">
    <property type="term" value="F:protein serine/threonine phosphatase inhibitor activity"/>
    <property type="evidence" value="ECO:0000318"/>
    <property type="project" value="GO_Central"/>
</dbReference>
<dbReference type="GO" id="GO:0007094">
    <property type="term" value="P:mitotic spindle assembly checkpoint signaling"/>
    <property type="evidence" value="ECO:0000266"/>
    <property type="project" value="PomBase"/>
</dbReference>
<dbReference type="InterPro" id="IPR011107">
    <property type="entry name" value="PPI_Ypi1"/>
</dbReference>
<dbReference type="PANTHER" id="PTHR20835:SF0">
    <property type="entry name" value="E3 UBIQUITIN-PROTEIN LIGASE PPP1R11"/>
    <property type="match status" value="1"/>
</dbReference>
<dbReference type="PANTHER" id="PTHR20835">
    <property type="entry name" value="E3 UBIQUITIN-PROTEIN LIGASE PPP1R11-RELATED"/>
    <property type="match status" value="1"/>
</dbReference>
<dbReference type="Pfam" id="PF07491">
    <property type="entry name" value="PPI_Ypi1"/>
    <property type="match status" value="1"/>
</dbReference>
<protein>
    <recommendedName>
        <fullName>Type 1 phosphatases regulator ypi1</fullName>
    </recommendedName>
</protein>
<sequence>MELTRPLGDISSSATVTIESTEESASISHEESENVLHLQPEPVRRVRWTVSTVDNEHMNKKKSKVCCIFHKQRKFDESSSDSDSDSDSDSSCSSCCSRNAYERA</sequence>
<feature type="chain" id="PRO_0000116667" description="Type 1 phosphatases regulator ypi1">
    <location>
        <begin position="1"/>
        <end position="104"/>
    </location>
</feature>
<feature type="region of interest" description="Disordered" evidence="2">
    <location>
        <begin position="1"/>
        <end position="41"/>
    </location>
</feature>
<feature type="region of interest" description="Disordered" evidence="2">
    <location>
        <begin position="74"/>
        <end position="104"/>
    </location>
</feature>
<feature type="compositionally biased region" description="Low complexity" evidence="2">
    <location>
        <begin position="10"/>
        <end position="27"/>
    </location>
</feature>
<feature type="compositionally biased region" description="Acidic residues" evidence="2">
    <location>
        <begin position="78"/>
        <end position="88"/>
    </location>
</feature>
<proteinExistence type="inferred from homology"/>
<keyword id="KW-0539">Nucleus</keyword>
<keyword id="KW-1185">Reference proteome</keyword>